<feature type="chain" id="PRO_0000070997" description="Co-chaperone protein HscB">
    <location>
        <begin position="1"/>
        <end position="173"/>
    </location>
</feature>
<feature type="domain" description="J" evidence="1">
    <location>
        <begin position="2"/>
        <end position="74"/>
    </location>
</feature>
<organism>
    <name type="scientific">Xenorhabdus nematophila (strain ATCC 19061 / DSM 3370 / CCUG 14189 / LMG 1036 / NCIMB 9965 / AN6)</name>
    <dbReference type="NCBI Taxonomy" id="406817"/>
    <lineage>
        <taxon>Bacteria</taxon>
        <taxon>Pseudomonadati</taxon>
        <taxon>Pseudomonadota</taxon>
        <taxon>Gammaproteobacteria</taxon>
        <taxon>Enterobacterales</taxon>
        <taxon>Morganellaceae</taxon>
        <taxon>Xenorhabdus</taxon>
    </lineage>
</organism>
<reference key="1">
    <citation type="journal article" date="2003" name="J. Bacteriol.">
        <title>Xenorhabdus nematophila requires an intact iscRSUA-hscBA-fdx operon to colonize Steinernema carpocapsae nematodes.</title>
        <authorList>
            <person name="Martens E.C."/>
            <person name="Gawronski-Salerno J."/>
            <person name="Vokal D.L."/>
            <person name="Pellitteri M.C."/>
            <person name="Menard M.L."/>
            <person name="Goodrich-Blair H."/>
        </authorList>
    </citation>
    <scope>NUCLEOTIDE SEQUENCE [GENOMIC DNA]</scope>
    <source>
        <strain>ATCC 19061 / DSM 3370 / CCUG 14189 / LMG 1036 / NCIMB 9965 / AN6</strain>
    </source>
</reference>
<reference key="2">
    <citation type="journal article" date="2011" name="PLoS ONE">
        <title>The entomopathogenic bacterial endosymbionts xenorhabdus and photorhabdus: convergent lifestyles from divergent genomes.</title>
        <authorList>
            <person name="Chaston J.M."/>
            <person name="Suen G."/>
            <person name="Tucker S.L."/>
            <person name="Andersen A.W."/>
            <person name="Bhasin A."/>
            <person name="Bode E."/>
            <person name="Bode H.B."/>
            <person name="Brachmann A.O."/>
            <person name="Cowles C.E."/>
            <person name="Cowles K.N."/>
            <person name="Darby C."/>
            <person name="de Leon L."/>
            <person name="Drace K."/>
            <person name="Du Z."/>
            <person name="Givaudan A."/>
            <person name="Herbert Tran E.E."/>
            <person name="Jewell K.A."/>
            <person name="Knack J.J."/>
            <person name="Krasomil-Osterfeld K.C."/>
            <person name="Kukor R."/>
            <person name="Lanois A."/>
            <person name="Latreille P."/>
            <person name="Leimgruber N.K."/>
            <person name="Lipke C.M."/>
            <person name="Liu R."/>
            <person name="Lu X."/>
            <person name="Martens E.C."/>
            <person name="Marri P.R."/>
            <person name="Medigue C."/>
            <person name="Menard M.L."/>
            <person name="Miller N.M."/>
            <person name="Morales-Soto N."/>
            <person name="Norton S."/>
            <person name="Ogier J.C."/>
            <person name="Orchard S.S."/>
            <person name="Park D."/>
            <person name="Park Y."/>
            <person name="Qurollo B.A."/>
            <person name="Sugar D.R."/>
            <person name="Richards G.R."/>
            <person name="Rouy Z."/>
            <person name="Slominski B."/>
            <person name="Slominski K."/>
            <person name="Snyder H."/>
            <person name="Tjaden B.C."/>
            <person name="van der Hoeven R."/>
            <person name="Welch R.D."/>
            <person name="Wheeler C."/>
            <person name="Xiang B."/>
            <person name="Barbazuk B."/>
            <person name="Gaudriault S."/>
            <person name="Goodner B."/>
            <person name="Slater S.C."/>
            <person name="Forst S."/>
            <person name="Goldman B.S."/>
            <person name="Goodrich-Blair H."/>
        </authorList>
    </citation>
    <scope>NUCLEOTIDE SEQUENCE [LARGE SCALE GENOMIC DNA]</scope>
    <source>
        <strain>ATCC 19061 / DSM 3370 / CCUG 14189 / LMG 1036 / NCIMB 9965 / AN6</strain>
    </source>
</reference>
<keyword id="KW-0143">Chaperone</keyword>
<keyword id="KW-1185">Reference proteome</keyword>
<evidence type="ECO:0000255" key="1">
    <source>
        <dbReference type="HAMAP-Rule" id="MF_00682"/>
    </source>
</evidence>
<proteinExistence type="inferred from homology"/>
<comment type="function">
    <text evidence="1">Co-chaperone involved in the maturation of iron-sulfur cluster-containing proteins. Seems to help targeting proteins to be folded toward HscA.</text>
</comment>
<comment type="subunit">
    <text evidence="1">Interacts with HscA and stimulates its ATPase activity. Interacts with IscU.</text>
</comment>
<comment type="similarity">
    <text evidence="1">Belongs to the HscB family.</text>
</comment>
<protein>
    <recommendedName>
        <fullName evidence="1">Co-chaperone protein HscB</fullName>
    </recommendedName>
    <alternativeName>
        <fullName evidence="1">Hsc20</fullName>
    </alternativeName>
</protein>
<sequence length="173" mass="20428">MDYFTLFGLPARYALDRELLATRYQELQRQFHPDRFANQPEREKTLALQQATTINTGYQTLKHPLKRAEYMLSQQGFDLSNEQHTMQDTAFLMQQLELREELDAIEHSSDTEAVLSGFSSRLNKMIKTRREQMEQQLDAAEWLIAADTVRKLRFLDKLQQQVEQLEERLLGDF</sequence>
<gene>
    <name evidence="1" type="primary">hscB</name>
    <name type="ordered locus">XNC1_3301</name>
</gene>
<dbReference type="EMBL" id="AY138456">
    <property type="protein sequence ID" value="AAN17748.1"/>
    <property type="molecule type" value="Genomic_DNA"/>
</dbReference>
<dbReference type="EMBL" id="FN667742">
    <property type="protein sequence ID" value="CBJ91353.1"/>
    <property type="molecule type" value="Genomic_DNA"/>
</dbReference>
<dbReference type="RefSeq" id="WP_010847166.1">
    <property type="nucleotide sequence ID" value="NC_014228.1"/>
</dbReference>
<dbReference type="SMR" id="Q8GLE5"/>
<dbReference type="STRING" id="406817.XNC1_3301"/>
<dbReference type="GeneID" id="24902610"/>
<dbReference type="KEGG" id="xne:XNC1_3301"/>
<dbReference type="eggNOG" id="COG1076">
    <property type="taxonomic scope" value="Bacteria"/>
</dbReference>
<dbReference type="HOGENOM" id="CLU_068529_2_0_6"/>
<dbReference type="Proteomes" id="UP000008075">
    <property type="component" value="Chromosome"/>
</dbReference>
<dbReference type="GO" id="GO:1990230">
    <property type="term" value="C:iron-sulfur cluster transfer complex"/>
    <property type="evidence" value="ECO:0007669"/>
    <property type="project" value="TreeGrafter"/>
</dbReference>
<dbReference type="GO" id="GO:0001671">
    <property type="term" value="F:ATPase activator activity"/>
    <property type="evidence" value="ECO:0007669"/>
    <property type="project" value="InterPro"/>
</dbReference>
<dbReference type="GO" id="GO:0051087">
    <property type="term" value="F:protein-folding chaperone binding"/>
    <property type="evidence" value="ECO:0007669"/>
    <property type="project" value="InterPro"/>
</dbReference>
<dbReference type="GO" id="GO:0044571">
    <property type="term" value="P:[2Fe-2S] cluster assembly"/>
    <property type="evidence" value="ECO:0007669"/>
    <property type="project" value="InterPro"/>
</dbReference>
<dbReference type="GO" id="GO:0051259">
    <property type="term" value="P:protein complex oligomerization"/>
    <property type="evidence" value="ECO:0007669"/>
    <property type="project" value="InterPro"/>
</dbReference>
<dbReference type="GO" id="GO:0006457">
    <property type="term" value="P:protein folding"/>
    <property type="evidence" value="ECO:0007669"/>
    <property type="project" value="UniProtKB-UniRule"/>
</dbReference>
<dbReference type="CDD" id="cd06257">
    <property type="entry name" value="DnaJ"/>
    <property type="match status" value="1"/>
</dbReference>
<dbReference type="Gene3D" id="1.10.287.110">
    <property type="entry name" value="DnaJ domain"/>
    <property type="match status" value="1"/>
</dbReference>
<dbReference type="Gene3D" id="1.20.1280.20">
    <property type="entry name" value="HscB, C-terminal domain"/>
    <property type="match status" value="1"/>
</dbReference>
<dbReference type="HAMAP" id="MF_00682">
    <property type="entry name" value="HscB"/>
    <property type="match status" value="1"/>
</dbReference>
<dbReference type="InterPro" id="IPR001623">
    <property type="entry name" value="DnaJ_domain"/>
</dbReference>
<dbReference type="InterPro" id="IPR004640">
    <property type="entry name" value="HscB"/>
</dbReference>
<dbReference type="InterPro" id="IPR036386">
    <property type="entry name" value="HscB_C_sf"/>
</dbReference>
<dbReference type="InterPro" id="IPR009073">
    <property type="entry name" value="HscB_oligo_C"/>
</dbReference>
<dbReference type="InterPro" id="IPR036869">
    <property type="entry name" value="J_dom_sf"/>
</dbReference>
<dbReference type="NCBIfam" id="TIGR00714">
    <property type="entry name" value="hscB"/>
    <property type="match status" value="1"/>
</dbReference>
<dbReference type="NCBIfam" id="NF003449">
    <property type="entry name" value="PRK05014.1"/>
    <property type="match status" value="1"/>
</dbReference>
<dbReference type="PANTHER" id="PTHR14021">
    <property type="entry name" value="IRON-SULFUR CLUSTER CO-CHAPERONE PROTEIN HSCB"/>
    <property type="match status" value="1"/>
</dbReference>
<dbReference type="PANTHER" id="PTHR14021:SF15">
    <property type="entry name" value="IRON-SULFUR CLUSTER CO-CHAPERONE PROTEIN HSCB"/>
    <property type="match status" value="1"/>
</dbReference>
<dbReference type="Pfam" id="PF07743">
    <property type="entry name" value="HSCB_C"/>
    <property type="match status" value="1"/>
</dbReference>
<dbReference type="SMART" id="SM00271">
    <property type="entry name" value="DnaJ"/>
    <property type="match status" value="1"/>
</dbReference>
<dbReference type="SUPFAM" id="SSF46565">
    <property type="entry name" value="Chaperone J-domain"/>
    <property type="match status" value="1"/>
</dbReference>
<dbReference type="SUPFAM" id="SSF47144">
    <property type="entry name" value="HSC20 (HSCB), C-terminal oligomerisation domain"/>
    <property type="match status" value="1"/>
</dbReference>
<dbReference type="PROSITE" id="PS50076">
    <property type="entry name" value="DNAJ_2"/>
    <property type="match status" value="1"/>
</dbReference>
<name>HSCB_XENNA</name>
<accession>Q8GLE5</accession>
<accession>D3VLM7</accession>